<protein>
    <recommendedName>
        <fullName>Pandinin-1</fullName>
        <shortName>Pin1</shortName>
    </recommendedName>
    <alternativeName>
        <fullName evidence="3">Non-disulfide-bridged peptide 2.3</fullName>
        <shortName evidence="3">NDBP-2.3</shortName>
    </alternativeName>
    <alternativeName>
        <fullName evidence="2">Non-disulfide-bridged peptide 3.4</fullName>
        <shortName evidence="2">NDBP-3.4</shortName>
    </alternativeName>
</protein>
<keyword id="KW-0044">Antibiotic</keyword>
<keyword id="KW-0929">Antimicrobial</keyword>
<keyword id="KW-0903">Direct protein sequencing</keyword>
<keyword id="KW-0406">Ion transport</keyword>
<keyword id="KW-0472">Membrane</keyword>
<keyword id="KW-0964">Secreted</keyword>
<keyword id="KW-1052">Target cell membrane</keyword>
<keyword id="KW-1053">Target membrane</keyword>
<keyword id="KW-0812">Transmembrane</keyword>
<keyword id="KW-0813">Transport</keyword>
<sequence length="44" mass="4800">GKVWDWIKSAAKKIWSSEPVSQLKGQVLNAAKNYVAEKIGATPT</sequence>
<dbReference type="SMR" id="P83239"/>
<dbReference type="TCDB" id="1.C.124.2.1">
    <property type="family name" value="the antimicrobial pore-forming pandinin (pin) family"/>
</dbReference>
<dbReference type="GO" id="GO:0005576">
    <property type="term" value="C:extracellular region"/>
    <property type="evidence" value="ECO:0007669"/>
    <property type="project" value="UniProtKB-SubCell"/>
</dbReference>
<dbReference type="GO" id="GO:0016020">
    <property type="term" value="C:membrane"/>
    <property type="evidence" value="ECO:0007669"/>
    <property type="project" value="UniProtKB-KW"/>
</dbReference>
<dbReference type="GO" id="GO:0044218">
    <property type="term" value="C:other organism cell membrane"/>
    <property type="evidence" value="ECO:0007669"/>
    <property type="project" value="UniProtKB-KW"/>
</dbReference>
<dbReference type="GO" id="GO:0042742">
    <property type="term" value="P:defense response to bacterium"/>
    <property type="evidence" value="ECO:0007669"/>
    <property type="project" value="UniProtKB-KW"/>
</dbReference>
<dbReference type="GO" id="GO:0044179">
    <property type="term" value="P:hemolysis in another organism"/>
    <property type="evidence" value="ECO:0007669"/>
    <property type="project" value="InterPro"/>
</dbReference>
<dbReference type="GO" id="GO:0006811">
    <property type="term" value="P:monoatomic ion transport"/>
    <property type="evidence" value="ECO:0007669"/>
    <property type="project" value="UniProtKB-KW"/>
</dbReference>
<dbReference type="InterPro" id="IPR012526">
    <property type="entry name" value="Antimicrobial_7"/>
</dbReference>
<dbReference type="Pfam" id="PF08102">
    <property type="entry name" value="Antimicrobial_7"/>
    <property type="match status" value="1"/>
</dbReference>
<name>NDB23_PANIM</name>
<accession>P83239</accession>
<feature type="chain" id="PRO_0000152881" description="Pandinin-1">
    <location>
        <begin position="1"/>
        <end position="44"/>
    </location>
</feature>
<evidence type="ECO:0000269" key="1">
    <source>
    </source>
</evidence>
<evidence type="ECO:0000303" key="2">
    <source>
    </source>
</evidence>
<evidence type="ECO:0000303" key="3">
    <source>
    </source>
</evidence>
<evidence type="ECO:0000305" key="4"/>
<reference key="1">
    <citation type="journal article" date="2001" name="Biochem. J.">
        <title>Characterization of unique amphipathic antimicrobial peptides from venom of the scorpion Pandinus imperator.</title>
        <authorList>
            <person name="Corzo G."/>
            <person name="Escoubas P."/>
            <person name="Villegas E."/>
            <person name="Barnham K.J."/>
            <person name="He W."/>
            <person name="Norton R.S."/>
            <person name="Nakajima T."/>
        </authorList>
    </citation>
    <scope>PROTEIN SEQUENCE</scope>
    <scope>FUNCTION</scope>
    <scope>TISSUE SPECIFICITY</scope>
    <scope>MASS SPECTROMETRY</scope>
    <source>
        <tissue>Venom</tissue>
    </source>
</reference>
<reference key="2">
    <citation type="journal article" date="2005" name="IUBMB Life">
        <title>Scorpion venom peptides without disulfide bridges.</title>
        <authorList>
            <person name="Zeng X.C."/>
            <person name="Corzo G."/>
            <person name="Hahin R."/>
        </authorList>
    </citation>
    <scope>NOMENCLATURE</scope>
</reference>
<reference key="3">
    <citation type="journal article" date="2014" name="Peptides">
        <title>Scorpion venom peptides with no disulfide bridges: a review.</title>
        <authorList>
            <person name="Almaaytah A."/>
            <person name="Albalas Q."/>
        </authorList>
    </citation>
    <scope>NOMENCLATURE</scope>
</reference>
<reference key="4">
    <citation type="journal article" date="2005" name="Biophys. J.">
        <title>Induction of morphological changes in model lipid membranes and the mechanism of membrane disruption by a large scorpion-derived pore-forming peptide.</title>
        <authorList>
            <person name="Nomura K."/>
            <person name="Ferrat G."/>
            <person name="Nakajima T."/>
            <person name="Darbon H."/>
            <person name="Iwashita T."/>
            <person name="Corzo G."/>
        </authorList>
    </citation>
    <scope>STRUCTURE BY NMR</scope>
    <scope>MUTAGENESIS</scope>
</reference>
<proteinExistence type="evidence at protein level"/>
<organism evidence="4">
    <name type="scientific">Pandinus imperator</name>
    <name type="common">Emperor scorpion</name>
    <dbReference type="NCBI Taxonomy" id="55084"/>
    <lineage>
        <taxon>Eukaryota</taxon>
        <taxon>Metazoa</taxon>
        <taxon>Ecdysozoa</taxon>
        <taxon>Arthropoda</taxon>
        <taxon>Chelicerata</taxon>
        <taxon>Arachnida</taxon>
        <taxon>Scorpiones</taxon>
        <taxon>Iurida</taxon>
        <taxon>Scorpionoidea</taxon>
        <taxon>Scorpionidae</taxon>
        <taxon>Pandininae</taxon>
        <taxon>Pandinus</taxon>
    </lineage>
</organism>
<comment type="function">
    <text evidence="1">Disrupts cell membranes through formation of pores. Strong antimicrobial activity against Gram-positive bacteria B.subtilis, S.epidermidis, E.faecalis and S.aureus. Less active against Gram-negative bacteria P.aeruginosa and E.coli. Has no antifungal or hemolytic activity.</text>
</comment>
<comment type="subcellular location">
    <subcellularLocation>
        <location>Secreted</location>
    </subcellularLocation>
    <subcellularLocation>
        <location>Target cell membrane</location>
    </subcellularLocation>
    <text>Forms a helical membrane channel in the prey.</text>
</comment>
<comment type="tissue specificity">
    <text evidence="1">Expressed by the venom gland.</text>
</comment>
<comment type="mass spectrometry" mass="4799.2" method="MALDI" evidence="1"/>
<comment type="similarity">
    <text evidence="4">Belongs to the non-disulfide-bridged peptide (NDBP) superfamily. Long chain multifunctional peptide (group 2) family.</text>
</comment>